<name>RBFA_MYCGE</name>
<sequence>MASYRKQRIENDIIRLINRTIINEIYDPVVKLGHVSHVKLSADFFHAVVYLDCYDRSQIQTVVNAFKKAQGVFSQMLAQNLYLAKSVKLHFVKDDAIDNALKIEQIINSLKN</sequence>
<dbReference type="EMBL" id="L43967">
    <property type="protein sequence ID" value="AAC71361.1"/>
    <property type="molecule type" value="Genomic_DNA"/>
</dbReference>
<dbReference type="PIR" id="H64215">
    <property type="entry name" value="H64215"/>
</dbReference>
<dbReference type="RefSeq" id="WP_009885829.1">
    <property type="nucleotide sequence ID" value="NC_000908.2"/>
</dbReference>
<dbReference type="SMR" id="P47389"/>
<dbReference type="FunCoup" id="P47389">
    <property type="interactions" value="154"/>
</dbReference>
<dbReference type="STRING" id="243273.MG_143"/>
<dbReference type="GeneID" id="88282275"/>
<dbReference type="KEGG" id="mge:MG_143"/>
<dbReference type="eggNOG" id="COG0858">
    <property type="taxonomic scope" value="Bacteria"/>
</dbReference>
<dbReference type="HOGENOM" id="CLU_089475_6_5_14"/>
<dbReference type="InParanoid" id="P47389"/>
<dbReference type="OrthoDB" id="400699at2"/>
<dbReference type="BioCyc" id="MGEN243273:G1GJ2-166-MONOMER"/>
<dbReference type="Proteomes" id="UP000000807">
    <property type="component" value="Chromosome"/>
</dbReference>
<dbReference type="GO" id="GO:0005829">
    <property type="term" value="C:cytosol"/>
    <property type="evidence" value="ECO:0000318"/>
    <property type="project" value="GO_Central"/>
</dbReference>
<dbReference type="GO" id="GO:0043024">
    <property type="term" value="F:ribosomal small subunit binding"/>
    <property type="evidence" value="ECO:0000318"/>
    <property type="project" value="GO_Central"/>
</dbReference>
<dbReference type="GO" id="GO:0030490">
    <property type="term" value="P:maturation of SSU-rRNA"/>
    <property type="evidence" value="ECO:0007669"/>
    <property type="project" value="UniProtKB-UniRule"/>
</dbReference>
<dbReference type="GO" id="GO:0042254">
    <property type="term" value="P:ribosome biogenesis"/>
    <property type="evidence" value="ECO:0000318"/>
    <property type="project" value="GO_Central"/>
</dbReference>
<dbReference type="Gene3D" id="3.30.300.20">
    <property type="match status" value="1"/>
</dbReference>
<dbReference type="HAMAP" id="MF_00003">
    <property type="entry name" value="RbfA"/>
    <property type="match status" value="1"/>
</dbReference>
<dbReference type="InterPro" id="IPR015946">
    <property type="entry name" value="KH_dom-like_a/b"/>
</dbReference>
<dbReference type="InterPro" id="IPR000238">
    <property type="entry name" value="RbfA"/>
</dbReference>
<dbReference type="InterPro" id="IPR023799">
    <property type="entry name" value="RbfA_dom_sf"/>
</dbReference>
<dbReference type="InterPro" id="IPR020053">
    <property type="entry name" value="Ribosome-bd_factorA_CS"/>
</dbReference>
<dbReference type="NCBIfam" id="TIGR00082">
    <property type="entry name" value="rbfA"/>
    <property type="match status" value="1"/>
</dbReference>
<dbReference type="PANTHER" id="PTHR33515">
    <property type="entry name" value="RIBOSOME-BINDING FACTOR A, CHLOROPLASTIC-RELATED"/>
    <property type="match status" value="1"/>
</dbReference>
<dbReference type="PANTHER" id="PTHR33515:SF1">
    <property type="entry name" value="RIBOSOME-BINDING FACTOR A, CHLOROPLASTIC-RELATED"/>
    <property type="match status" value="1"/>
</dbReference>
<dbReference type="Pfam" id="PF02033">
    <property type="entry name" value="RBFA"/>
    <property type="match status" value="1"/>
</dbReference>
<dbReference type="SUPFAM" id="SSF89919">
    <property type="entry name" value="Ribosome-binding factor A, RbfA"/>
    <property type="match status" value="1"/>
</dbReference>
<dbReference type="PROSITE" id="PS01319">
    <property type="entry name" value="RBFA"/>
    <property type="match status" value="1"/>
</dbReference>
<comment type="function">
    <text evidence="1">One of several proteins that assist in the late maturation steps of the functional core of the 30S ribosomal subunit. Associates with free 30S ribosomal subunits (but not with 30S subunits that are part of 70S ribosomes or polysomes). Required for efficient processing of 16S rRNA. May interact with the 5'-terminal helix region of 16S rRNA.</text>
</comment>
<comment type="subunit">
    <text evidence="1">Monomer. Binds 30S ribosomal subunits, but not 50S ribosomal subunits or 70S ribosomes.</text>
</comment>
<comment type="subcellular location">
    <subcellularLocation>
        <location evidence="1">Cytoplasm</location>
    </subcellularLocation>
</comment>
<comment type="similarity">
    <text evidence="1">Belongs to the RbfA family.</text>
</comment>
<accession>P47389</accession>
<gene>
    <name evidence="1" type="primary">rbfA</name>
    <name type="ordered locus">MG143</name>
</gene>
<proteinExistence type="inferred from homology"/>
<evidence type="ECO:0000255" key="1">
    <source>
        <dbReference type="HAMAP-Rule" id="MF_00003"/>
    </source>
</evidence>
<protein>
    <recommendedName>
        <fullName evidence="1">Ribosome-binding factor A</fullName>
    </recommendedName>
</protein>
<keyword id="KW-0963">Cytoplasm</keyword>
<keyword id="KW-1185">Reference proteome</keyword>
<keyword id="KW-0690">Ribosome biogenesis</keyword>
<organism>
    <name type="scientific">Mycoplasma genitalium (strain ATCC 33530 / DSM 19775 / NCTC 10195 / G37)</name>
    <name type="common">Mycoplasmoides genitalium</name>
    <dbReference type="NCBI Taxonomy" id="243273"/>
    <lineage>
        <taxon>Bacteria</taxon>
        <taxon>Bacillati</taxon>
        <taxon>Mycoplasmatota</taxon>
        <taxon>Mycoplasmoidales</taxon>
        <taxon>Mycoplasmoidaceae</taxon>
        <taxon>Mycoplasmoides</taxon>
    </lineage>
</organism>
<feature type="chain" id="PRO_0000102692" description="Ribosome-binding factor A">
    <location>
        <begin position="1"/>
        <end position="112"/>
    </location>
</feature>
<reference key="1">
    <citation type="journal article" date="1995" name="Science">
        <title>The minimal gene complement of Mycoplasma genitalium.</title>
        <authorList>
            <person name="Fraser C.M."/>
            <person name="Gocayne J.D."/>
            <person name="White O."/>
            <person name="Adams M.D."/>
            <person name="Clayton R.A."/>
            <person name="Fleischmann R.D."/>
            <person name="Bult C.J."/>
            <person name="Kerlavage A.R."/>
            <person name="Sutton G.G."/>
            <person name="Kelley J.M."/>
            <person name="Fritchman J.L."/>
            <person name="Weidman J.F."/>
            <person name="Small K.V."/>
            <person name="Sandusky M."/>
            <person name="Fuhrmann J.L."/>
            <person name="Nguyen D.T."/>
            <person name="Utterback T.R."/>
            <person name="Saudek D.M."/>
            <person name="Phillips C.A."/>
            <person name="Merrick J.M."/>
            <person name="Tomb J.-F."/>
            <person name="Dougherty B.A."/>
            <person name="Bott K.F."/>
            <person name="Hu P.-C."/>
            <person name="Lucier T.S."/>
            <person name="Peterson S.N."/>
            <person name="Smith H.O."/>
            <person name="Hutchison C.A. III"/>
            <person name="Venter J.C."/>
        </authorList>
    </citation>
    <scope>NUCLEOTIDE SEQUENCE [LARGE SCALE GENOMIC DNA]</scope>
    <source>
        <strain>ATCC 33530 / DSM 19775 / NCTC 10195 / G37</strain>
    </source>
</reference>